<dbReference type="EC" id="2.4.1.21" evidence="1"/>
<dbReference type="EMBL" id="CP001096">
    <property type="protein sequence ID" value="ACE98946.1"/>
    <property type="molecule type" value="Genomic_DNA"/>
</dbReference>
<dbReference type="RefSeq" id="WP_012494111.1">
    <property type="nucleotide sequence ID" value="NC_011004.1"/>
</dbReference>
<dbReference type="SMR" id="B3Q9C2"/>
<dbReference type="CAZy" id="GT5">
    <property type="family name" value="Glycosyltransferase Family 5"/>
</dbReference>
<dbReference type="KEGG" id="rpt:Rpal_0386"/>
<dbReference type="HOGENOM" id="CLU_009583_18_4_5"/>
<dbReference type="OrthoDB" id="9808590at2"/>
<dbReference type="UniPathway" id="UPA00164"/>
<dbReference type="Proteomes" id="UP000001725">
    <property type="component" value="Chromosome"/>
</dbReference>
<dbReference type="GO" id="GO:0005829">
    <property type="term" value="C:cytosol"/>
    <property type="evidence" value="ECO:0007669"/>
    <property type="project" value="TreeGrafter"/>
</dbReference>
<dbReference type="GO" id="GO:0009011">
    <property type="term" value="F:alpha-1,4-glucan glucosyltransferase (ADP-glucose donor) activity"/>
    <property type="evidence" value="ECO:0007669"/>
    <property type="project" value="UniProtKB-UniRule"/>
</dbReference>
<dbReference type="GO" id="GO:0004373">
    <property type="term" value="F:alpha-1,4-glucan glucosyltransferase (UDP-glucose donor) activity"/>
    <property type="evidence" value="ECO:0007669"/>
    <property type="project" value="InterPro"/>
</dbReference>
<dbReference type="GO" id="GO:0005978">
    <property type="term" value="P:glycogen biosynthetic process"/>
    <property type="evidence" value="ECO:0007669"/>
    <property type="project" value="UniProtKB-UniRule"/>
</dbReference>
<dbReference type="CDD" id="cd03791">
    <property type="entry name" value="GT5_Glycogen_synthase_DULL1-like"/>
    <property type="match status" value="1"/>
</dbReference>
<dbReference type="Gene3D" id="3.40.50.2000">
    <property type="entry name" value="Glycogen Phosphorylase B"/>
    <property type="match status" value="2"/>
</dbReference>
<dbReference type="HAMAP" id="MF_00484">
    <property type="entry name" value="Glycogen_synth"/>
    <property type="match status" value="1"/>
</dbReference>
<dbReference type="InterPro" id="IPR001296">
    <property type="entry name" value="Glyco_trans_1"/>
</dbReference>
<dbReference type="InterPro" id="IPR011835">
    <property type="entry name" value="GS/SS"/>
</dbReference>
<dbReference type="InterPro" id="IPR013534">
    <property type="entry name" value="Starch_synth_cat_dom"/>
</dbReference>
<dbReference type="NCBIfam" id="TIGR02095">
    <property type="entry name" value="glgA"/>
    <property type="match status" value="1"/>
</dbReference>
<dbReference type="NCBIfam" id="NF001899">
    <property type="entry name" value="PRK00654.1-2"/>
    <property type="match status" value="1"/>
</dbReference>
<dbReference type="NCBIfam" id="NF010699">
    <property type="entry name" value="PRK14099.1"/>
    <property type="match status" value="1"/>
</dbReference>
<dbReference type="PANTHER" id="PTHR45825:SF11">
    <property type="entry name" value="ALPHA AMYLASE DOMAIN-CONTAINING PROTEIN"/>
    <property type="match status" value="1"/>
</dbReference>
<dbReference type="PANTHER" id="PTHR45825">
    <property type="entry name" value="GRANULE-BOUND STARCH SYNTHASE 1, CHLOROPLASTIC/AMYLOPLASTIC"/>
    <property type="match status" value="1"/>
</dbReference>
<dbReference type="Pfam" id="PF08323">
    <property type="entry name" value="Glyco_transf_5"/>
    <property type="match status" value="1"/>
</dbReference>
<dbReference type="Pfam" id="PF00534">
    <property type="entry name" value="Glycos_transf_1"/>
    <property type="match status" value="1"/>
</dbReference>
<dbReference type="SUPFAM" id="SSF53756">
    <property type="entry name" value="UDP-Glycosyltransferase/glycogen phosphorylase"/>
    <property type="match status" value="1"/>
</dbReference>
<reference key="1">
    <citation type="submission" date="2008-05" db="EMBL/GenBank/DDBJ databases">
        <title>Complete sequence of Rhodopseudomonas palustris TIE-1.</title>
        <authorList>
            <consortium name="US DOE Joint Genome Institute"/>
            <person name="Lucas S."/>
            <person name="Copeland A."/>
            <person name="Lapidus A."/>
            <person name="Glavina del Rio T."/>
            <person name="Dalin E."/>
            <person name="Tice H."/>
            <person name="Pitluck S."/>
            <person name="Chain P."/>
            <person name="Malfatti S."/>
            <person name="Shin M."/>
            <person name="Vergez L."/>
            <person name="Lang D."/>
            <person name="Schmutz J."/>
            <person name="Larimer F."/>
            <person name="Land M."/>
            <person name="Hauser L."/>
            <person name="Kyrpides N."/>
            <person name="Mikhailova N."/>
            <person name="Emerson D."/>
            <person name="Newman D.K."/>
            <person name="Roden E."/>
            <person name="Richardson P."/>
        </authorList>
    </citation>
    <scope>NUCLEOTIDE SEQUENCE [LARGE SCALE GENOMIC DNA]</scope>
    <source>
        <strain>TIE-1</strain>
    </source>
</reference>
<keyword id="KW-0320">Glycogen biosynthesis</keyword>
<keyword id="KW-0328">Glycosyltransferase</keyword>
<keyword id="KW-0808">Transferase</keyword>
<organism>
    <name type="scientific">Rhodopseudomonas palustris (strain TIE-1)</name>
    <dbReference type="NCBI Taxonomy" id="395960"/>
    <lineage>
        <taxon>Bacteria</taxon>
        <taxon>Pseudomonadati</taxon>
        <taxon>Pseudomonadota</taxon>
        <taxon>Alphaproteobacteria</taxon>
        <taxon>Hyphomicrobiales</taxon>
        <taxon>Nitrobacteraceae</taxon>
        <taxon>Rhodopseudomonas</taxon>
    </lineage>
</organism>
<evidence type="ECO:0000255" key="1">
    <source>
        <dbReference type="HAMAP-Rule" id="MF_00484"/>
    </source>
</evidence>
<feature type="chain" id="PRO_1000126095" description="Glycogen synthase">
    <location>
        <begin position="1"/>
        <end position="483"/>
    </location>
</feature>
<feature type="binding site" evidence="1">
    <location>
        <position position="18"/>
    </location>
    <ligand>
        <name>ADP-alpha-D-glucose</name>
        <dbReference type="ChEBI" id="CHEBI:57498"/>
    </ligand>
</feature>
<protein>
    <recommendedName>
        <fullName evidence="1">Glycogen synthase</fullName>
        <ecNumber evidence="1">2.4.1.21</ecNumber>
    </recommendedName>
    <alternativeName>
        <fullName evidence="1">Starch [bacterial glycogen] synthase</fullName>
    </alternativeName>
</protein>
<name>GLGA_RHOPT</name>
<sequence>MTTLAVLSVASELFPLIKTGGLADVAGALPAALRANDVAVTSLLPGYPAVLGGIEDPQQVHSFNELFGGTARLLAARCGDLDLFVLDAPHLYVRPGNPYVGPDGKDWPDNGLRFAALAQVGAALGQGLLPHYKPDVLHAHDWQTGLLPAYLKYSGRPGPKTVFTIHNLAFQGRFPYELLGRLGLPERAFGLDGIEYYGGIGYLKAGLQLADRITTVSPSYAAEIQGSEAGMGLDGLLQLRADRLSGILNGIDTDVWNPASDALISATYDVESIAARARNKKVLQARFGLKPEPGALLYGVISRLSWQKGLDLLLQALPQLIGGGAQLALLGSGDAELEQGYAAAARKYPGQVGAVIGYDEALAHQIQAGADALLVPSRFEPCGLTQLCALRYGAVPVVARVGGLADTVVDANEMATATGVATGVQFAPVTTDALIKAFGKTRALFADVVAWRNLQINGMTTDVSWKNPAQHYAKLYRDLVAER</sequence>
<accession>B3Q9C2</accession>
<comment type="function">
    <text evidence="1">Synthesizes alpha-1,4-glucan chains using ADP-glucose.</text>
</comment>
<comment type="catalytic activity">
    <reaction evidence="1">
        <text>[(1-&gt;4)-alpha-D-glucosyl](n) + ADP-alpha-D-glucose = [(1-&gt;4)-alpha-D-glucosyl](n+1) + ADP + H(+)</text>
        <dbReference type="Rhea" id="RHEA:18189"/>
        <dbReference type="Rhea" id="RHEA-COMP:9584"/>
        <dbReference type="Rhea" id="RHEA-COMP:9587"/>
        <dbReference type="ChEBI" id="CHEBI:15378"/>
        <dbReference type="ChEBI" id="CHEBI:15444"/>
        <dbReference type="ChEBI" id="CHEBI:57498"/>
        <dbReference type="ChEBI" id="CHEBI:456216"/>
        <dbReference type="EC" id="2.4.1.21"/>
    </reaction>
</comment>
<comment type="pathway">
    <text evidence="1">Glycan biosynthesis; glycogen biosynthesis.</text>
</comment>
<comment type="similarity">
    <text evidence="1">Belongs to the glycosyltransferase 1 family. Bacterial/plant glycogen synthase subfamily.</text>
</comment>
<gene>
    <name evidence="1" type="primary">glgA</name>
    <name type="ordered locus">Rpal_0386</name>
</gene>
<proteinExistence type="inferred from homology"/>